<comment type="function">
    <text evidence="1">Part of the MsrPQ system that repairs oxidized periplasmic proteins containing methionine sulfoxide residues (Met-O), using respiratory chain electrons. Thus protects these proteins from oxidative-stress damage caused by reactive species of oxygen and chlorine generated by the host defense mechanisms. MsrPQ is essential for the maintenance of envelope integrity under bleach stress, rescuing a wide series of structurally unrelated periplasmic proteins from methionine oxidation, including the primary periplasmic chaperone SurA and the lipoprotein Pal. The catalytic subunit MsrP is non-stereospecific, being able to reduce both (R-) and (S-) diastereoisomers of methionine sulfoxide.</text>
</comment>
<comment type="catalytic activity">
    <reaction evidence="1">
        <text>L-methionyl-[protein] + a quinone + H2O = L-methionyl-(S)-S-oxide-[protein] + a quinol</text>
        <dbReference type="Rhea" id="RHEA:51292"/>
        <dbReference type="Rhea" id="RHEA-COMP:12313"/>
        <dbReference type="Rhea" id="RHEA-COMP:12315"/>
        <dbReference type="ChEBI" id="CHEBI:15377"/>
        <dbReference type="ChEBI" id="CHEBI:16044"/>
        <dbReference type="ChEBI" id="CHEBI:24646"/>
        <dbReference type="ChEBI" id="CHEBI:44120"/>
        <dbReference type="ChEBI" id="CHEBI:132124"/>
    </reaction>
</comment>
<comment type="catalytic activity">
    <reaction evidence="1">
        <text>L-methionyl-[protein] + a quinone + H2O = L-methionyl-(R)-S-oxide-[protein] + a quinol</text>
        <dbReference type="Rhea" id="RHEA:51296"/>
        <dbReference type="Rhea" id="RHEA-COMP:12313"/>
        <dbReference type="Rhea" id="RHEA-COMP:12314"/>
        <dbReference type="ChEBI" id="CHEBI:15377"/>
        <dbReference type="ChEBI" id="CHEBI:16044"/>
        <dbReference type="ChEBI" id="CHEBI:24646"/>
        <dbReference type="ChEBI" id="CHEBI:45764"/>
        <dbReference type="ChEBI" id="CHEBI:132124"/>
    </reaction>
</comment>
<comment type="cofactor">
    <cofactor evidence="1">
        <name>Mo-molybdopterin</name>
        <dbReference type="ChEBI" id="CHEBI:71302"/>
    </cofactor>
    <text evidence="1">Binds 1 Mo-molybdopterin (Mo-MPT) cofactor per subunit.</text>
</comment>
<comment type="subunit">
    <text evidence="1">Heterodimer of a catalytic subunit (MsrP) and a heme-binding subunit (MsrQ).</text>
</comment>
<comment type="subcellular location">
    <subcellularLocation>
        <location evidence="1">Periplasm</location>
    </subcellularLocation>
    <text evidence="1">Is attached to the inner membrane when interacting with the MsrQ subunit.</text>
</comment>
<comment type="PTM">
    <text evidence="1">Predicted to be exported by the Tat system. The position of the signal peptide cleavage has not been experimentally proven.</text>
</comment>
<comment type="similarity">
    <text evidence="1">Belongs to the MsrP family.</text>
</comment>
<name>MSRP_SALSV</name>
<organism>
    <name type="scientific">Salmonella schwarzengrund (strain CVM19633)</name>
    <dbReference type="NCBI Taxonomy" id="439843"/>
    <lineage>
        <taxon>Bacteria</taxon>
        <taxon>Pseudomonadati</taxon>
        <taxon>Pseudomonadota</taxon>
        <taxon>Gammaproteobacteria</taxon>
        <taxon>Enterobacterales</taxon>
        <taxon>Enterobacteriaceae</taxon>
        <taxon>Salmonella</taxon>
    </lineage>
</organism>
<feature type="signal peptide" description="Tat-type signal" evidence="1">
    <location>
        <begin position="1"/>
        <end position="44"/>
    </location>
</feature>
<feature type="chain" id="PRO_1000138725" description="Protein-methionine-sulfoxide reductase catalytic subunit MsrP" evidence="1">
    <location>
        <begin position="45"/>
        <end position="334"/>
    </location>
</feature>
<feature type="binding site" evidence="1">
    <location>
        <position position="88"/>
    </location>
    <ligand>
        <name>Mo-molybdopterin</name>
        <dbReference type="ChEBI" id="CHEBI:71302"/>
    </ligand>
</feature>
<feature type="binding site" evidence="1">
    <location>
        <begin position="91"/>
        <end position="92"/>
    </location>
    <ligand>
        <name>Mo-molybdopterin</name>
        <dbReference type="ChEBI" id="CHEBI:71302"/>
    </ligand>
</feature>
<feature type="binding site" evidence="1">
    <location>
        <position position="146"/>
    </location>
    <ligand>
        <name>Mo-molybdopterin</name>
        <dbReference type="ChEBI" id="CHEBI:71302"/>
    </ligand>
    <ligandPart>
        <name>Mo</name>
        <dbReference type="ChEBI" id="CHEBI:28685"/>
    </ligandPart>
</feature>
<feature type="binding site" evidence="1">
    <location>
        <position position="181"/>
    </location>
    <ligand>
        <name>Mo-molybdopterin</name>
        <dbReference type="ChEBI" id="CHEBI:71302"/>
    </ligand>
</feature>
<feature type="binding site" evidence="1">
    <location>
        <position position="233"/>
    </location>
    <ligand>
        <name>Mo-molybdopterin</name>
        <dbReference type="ChEBI" id="CHEBI:71302"/>
    </ligand>
</feature>
<feature type="binding site" evidence="1">
    <location>
        <position position="238"/>
    </location>
    <ligand>
        <name>Mo-molybdopterin</name>
        <dbReference type="ChEBI" id="CHEBI:71302"/>
    </ligand>
</feature>
<feature type="binding site" evidence="1">
    <location>
        <begin position="249"/>
        <end position="251"/>
    </location>
    <ligand>
        <name>Mo-molybdopterin</name>
        <dbReference type="ChEBI" id="CHEBI:71302"/>
    </ligand>
</feature>
<reference key="1">
    <citation type="journal article" date="2011" name="J. Bacteriol.">
        <title>Comparative genomics of 28 Salmonella enterica isolates: evidence for CRISPR-mediated adaptive sublineage evolution.</title>
        <authorList>
            <person name="Fricke W.F."/>
            <person name="Mammel M.K."/>
            <person name="McDermott P.F."/>
            <person name="Tartera C."/>
            <person name="White D.G."/>
            <person name="Leclerc J.E."/>
            <person name="Ravel J."/>
            <person name="Cebula T.A."/>
        </authorList>
    </citation>
    <scope>NUCLEOTIDE SEQUENCE [LARGE SCALE GENOMIC DNA]</scope>
    <source>
        <strain>CVM19633</strain>
    </source>
</reference>
<evidence type="ECO:0000255" key="1">
    <source>
        <dbReference type="HAMAP-Rule" id="MF_01206"/>
    </source>
</evidence>
<keyword id="KW-0479">Metal-binding</keyword>
<keyword id="KW-0500">Molybdenum</keyword>
<keyword id="KW-0560">Oxidoreductase</keyword>
<keyword id="KW-0574">Periplasm</keyword>
<keyword id="KW-0732">Signal</keyword>
<proteinExistence type="inferred from homology"/>
<protein>
    <recommendedName>
        <fullName evidence="1">Protein-methionine-sulfoxide reductase catalytic subunit MsrP</fullName>
        <ecNumber evidence="1">1.8.5.-</ecNumber>
    </recommendedName>
</protein>
<gene>
    <name evidence="1" type="primary">msrP</name>
    <name type="ordered locus">SeSA_A3569</name>
</gene>
<accession>B4TX85</accession>
<sequence length="334" mass="37478">MKKIRPLTEADVTAESAFFMQRRQVLKALGISAAALSLPSTAQADLFSWFKGNDRPKAPAGKPLEFSQPAAWRSDLALTPEDKVTGYNNFYEFGLDKADPAANAGSLKTEPWTLKISGEVAKPFTLDYDDLTHRFPLEERIYRMRCVEAWSMVVPWIGFPLYKLLAQAQPTSHAKYVAFETLYAPDDMPGQKDRFIGGGLKYPYVEGLRLDEAMHPLTLMTVGVYGKALPPQNGAPIRLIVPWKYGFKGIKSVVSIKLTRERPPTTWNLSAPNEYGFYANVNPHVDHPRWSQATERFIGSGGILDVQRQPTLLFNGYANEVASLYRGLNLRENF</sequence>
<dbReference type="EC" id="1.8.5.-" evidence="1"/>
<dbReference type="EMBL" id="CP001127">
    <property type="protein sequence ID" value="ACF89113.1"/>
    <property type="molecule type" value="Genomic_DNA"/>
</dbReference>
<dbReference type="RefSeq" id="WP_000723877.1">
    <property type="nucleotide sequence ID" value="NC_011094.1"/>
</dbReference>
<dbReference type="SMR" id="B4TX85"/>
<dbReference type="KEGG" id="sew:SeSA_A3569"/>
<dbReference type="HOGENOM" id="CLU_045520_0_0_6"/>
<dbReference type="Proteomes" id="UP000001865">
    <property type="component" value="Chromosome"/>
</dbReference>
<dbReference type="GO" id="GO:0042597">
    <property type="term" value="C:periplasmic space"/>
    <property type="evidence" value="ECO:0007669"/>
    <property type="project" value="UniProtKB-SubCell"/>
</dbReference>
<dbReference type="GO" id="GO:0046872">
    <property type="term" value="F:metal ion binding"/>
    <property type="evidence" value="ECO:0007669"/>
    <property type="project" value="UniProtKB-KW"/>
</dbReference>
<dbReference type="GO" id="GO:0043546">
    <property type="term" value="F:molybdopterin cofactor binding"/>
    <property type="evidence" value="ECO:0007669"/>
    <property type="project" value="UniProtKB-UniRule"/>
</dbReference>
<dbReference type="GO" id="GO:0016672">
    <property type="term" value="F:oxidoreductase activity, acting on a sulfur group of donors, quinone or similar compound as acceptor"/>
    <property type="evidence" value="ECO:0007669"/>
    <property type="project" value="UniProtKB-UniRule"/>
</dbReference>
<dbReference type="GO" id="GO:0030091">
    <property type="term" value="P:protein repair"/>
    <property type="evidence" value="ECO:0007669"/>
    <property type="project" value="UniProtKB-UniRule"/>
</dbReference>
<dbReference type="CDD" id="cd02107">
    <property type="entry name" value="YedY_like_Moco"/>
    <property type="match status" value="1"/>
</dbReference>
<dbReference type="FunFam" id="3.90.420.10:FF:000001">
    <property type="entry name" value="Protein-methionine-sulfoxide reductase catalytic subunit MsrP"/>
    <property type="match status" value="1"/>
</dbReference>
<dbReference type="Gene3D" id="3.90.420.10">
    <property type="entry name" value="Oxidoreductase, molybdopterin-binding domain"/>
    <property type="match status" value="1"/>
</dbReference>
<dbReference type="HAMAP" id="MF_01206">
    <property type="entry name" value="MsrP"/>
    <property type="match status" value="1"/>
</dbReference>
<dbReference type="InterPro" id="IPR022867">
    <property type="entry name" value="MsrP"/>
</dbReference>
<dbReference type="InterPro" id="IPR000572">
    <property type="entry name" value="OxRdtase_Mopterin-bd_dom"/>
</dbReference>
<dbReference type="InterPro" id="IPR036374">
    <property type="entry name" value="OxRdtase_Mopterin-bd_sf"/>
</dbReference>
<dbReference type="InterPro" id="IPR006311">
    <property type="entry name" value="TAT_signal"/>
</dbReference>
<dbReference type="NCBIfam" id="NF003767">
    <property type="entry name" value="PRK05363.1"/>
    <property type="match status" value="1"/>
</dbReference>
<dbReference type="PANTHER" id="PTHR43032">
    <property type="entry name" value="PROTEIN-METHIONINE-SULFOXIDE REDUCTASE"/>
    <property type="match status" value="1"/>
</dbReference>
<dbReference type="PANTHER" id="PTHR43032:SF3">
    <property type="entry name" value="PROTEIN-METHIONINE-SULFOXIDE REDUCTASE CATALYTIC SUBUNIT MSRP"/>
    <property type="match status" value="1"/>
</dbReference>
<dbReference type="Pfam" id="PF00174">
    <property type="entry name" value="Oxidored_molyb"/>
    <property type="match status" value="1"/>
</dbReference>
<dbReference type="SUPFAM" id="SSF56524">
    <property type="entry name" value="Oxidoreductase molybdopterin-binding domain"/>
    <property type="match status" value="1"/>
</dbReference>
<dbReference type="PROSITE" id="PS51318">
    <property type="entry name" value="TAT"/>
    <property type="match status" value="1"/>
</dbReference>